<reference key="1">
    <citation type="journal article" date="2009" name="PLoS Genet.">
        <title>Adaptations to submarine hydrothermal environments exemplified by the genome of Nautilia profundicola.</title>
        <authorList>
            <person name="Campbell B.J."/>
            <person name="Smith J.L."/>
            <person name="Hanson T.E."/>
            <person name="Klotz M.G."/>
            <person name="Stein L.Y."/>
            <person name="Lee C.K."/>
            <person name="Wu D."/>
            <person name="Robinson J.M."/>
            <person name="Khouri H.M."/>
            <person name="Eisen J.A."/>
            <person name="Cary S.C."/>
        </authorList>
    </citation>
    <scope>NUCLEOTIDE SEQUENCE [LARGE SCALE GENOMIC DNA]</scope>
    <source>
        <strain>ATCC BAA-1463 / DSM 18972 / AmH</strain>
    </source>
</reference>
<comment type="function">
    <text evidence="1">Allows the formation of correctly charged Asn-tRNA(Asn) or Gln-tRNA(Gln) through the transamidation of misacylated Asp-tRNA(Asn) or Glu-tRNA(Gln) in organisms which lack either or both of asparaginyl-tRNA or glutaminyl-tRNA synthetases. The reaction takes place in the presence of glutamine and ATP through an activated phospho-Asp-tRNA(Asn) or phospho-Glu-tRNA(Gln).</text>
</comment>
<comment type="catalytic activity">
    <reaction evidence="1">
        <text>L-glutamyl-tRNA(Gln) + L-glutamine + ATP + H2O = L-glutaminyl-tRNA(Gln) + L-glutamate + ADP + phosphate + H(+)</text>
        <dbReference type="Rhea" id="RHEA:17521"/>
        <dbReference type="Rhea" id="RHEA-COMP:9681"/>
        <dbReference type="Rhea" id="RHEA-COMP:9684"/>
        <dbReference type="ChEBI" id="CHEBI:15377"/>
        <dbReference type="ChEBI" id="CHEBI:15378"/>
        <dbReference type="ChEBI" id="CHEBI:29985"/>
        <dbReference type="ChEBI" id="CHEBI:30616"/>
        <dbReference type="ChEBI" id="CHEBI:43474"/>
        <dbReference type="ChEBI" id="CHEBI:58359"/>
        <dbReference type="ChEBI" id="CHEBI:78520"/>
        <dbReference type="ChEBI" id="CHEBI:78521"/>
        <dbReference type="ChEBI" id="CHEBI:456216"/>
    </reaction>
</comment>
<comment type="catalytic activity">
    <reaction evidence="1">
        <text>L-aspartyl-tRNA(Asn) + L-glutamine + ATP + H2O = L-asparaginyl-tRNA(Asn) + L-glutamate + ADP + phosphate + 2 H(+)</text>
        <dbReference type="Rhea" id="RHEA:14513"/>
        <dbReference type="Rhea" id="RHEA-COMP:9674"/>
        <dbReference type="Rhea" id="RHEA-COMP:9677"/>
        <dbReference type="ChEBI" id="CHEBI:15377"/>
        <dbReference type="ChEBI" id="CHEBI:15378"/>
        <dbReference type="ChEBI" id="CHEBI:29985"/>
        <dbReference type="ChEBI" id="CHEBI:30616"/>
        <dbReference type="ChEBI" id="CHEBI:43474"/>
        <dbReference type="ChEBI" id="CHEBI:58359"/>
        <dbReference type="ChEBI" id="CHEBI:78515"/>
        <dbReference type="ChEBI" id="CHEBI:78516"/>
        <dbReference type="ChEBI" id="CHEBI:456216"/>
    </reaction>
</comment>
<comment type="subunit">
    <text evidence="1">Heterotrimer of A, B and C subunits.</text>
</comment>
<comment type="similarity">
    <text evidence="1">Belongs to the GatC family.</text>
</comment>
<evidence type="ECO:0000255" key="1">
    <source>
        <dbReference type="HAMAP-Rule" id="MF_00122"/>
    </source>
</evidence>
<organism>
    <name type="scientific">Nautilia profundicola (strain ATCC BAA-1463 / DSM 18972 / AmH)</name>
    <dbReference type="NCBI Taxonomy" id="598659"/>
    <lineage>
        <taxon>Bacteria</taxon>
        <taxon>Pseudomonadati</taxon>
        <taxon>Campylobacterota</taxon>
        <taxon>Epsilonproteobacteria</taxon>
        <taxon>Nautiliales</taxon>
        <taxon>Nautiliaceae</taxon>
        <taxon>Nautilia</taxon>
    </lineage>
</organism>
<gene>
    <name evidence="1" type="primary">gatC</name>
    <name type="ordered locus">NAMH_1144</name>
</gene>
<accession>B9LA82</accession>
<sequence length="93" mass="10602">MKIDESLVKRLETLSMVEIEDKASMAKDLAEIVEFVEMLNELDTSNVDATFSTLDNSTYLREDEPIKNNVIEEILEHAPKAKDGFFIVPKIIE</sequence>
<feature type="chain" id="PRO_1000122577" description="Aspartyl/glutamyl-tRNA(Asn/Gln) amidotransferase subunit C">
    <location>
        <begin position="1"/>
        <end position="93"/>
    </location>
</feature>
<proteinExistence type="inferred from homology"/>
<dbReference type="EC" id="6.3.5.-" evidence="1"/>
<dbReference type="EMBL" id="CP001279">
    <property type="protein sequence ID" value="ACM92487.1"/>
    <property type="molecule type" value="Genomic_DNA"/>
</dbReference>
<dbReference type="RefSeq" id="WP_012663858.1">
    <property type="nucleotide sequence ID" value="NC_012115.1"/>
</dbReference>
<dbReference type="SMR" id="B9LA82"/>
<dbReference type="STRING" id="598659.NAMH_1144"/>
<dbReference type="KEGG" id="nam:NAMH_1144"/>
<dbReference type="eggNOG" id="COG0721">
    <property type="taxonomic scope" value="Bacteria"/>
</dbReference>
<dbReference type="HOGENOM" id="CLU_105899_2_1_7"/>
<dbReference type="OrthoDB" id="9813938at2"/>
<dbReference type="Proteomes" id="UP000000448">
    <property type="component" value="Chromosome"/>
</dbReference>
<dbReference type="GO" id="GO:0050566">
    <property type="term" value="F:asparaginyl-tRNA synthase (glutamine-hydrolyzing) activity"/>
    <property type="evidence" value="ECO:0007669"/>
    <property type="project" value="RHEA"/>
</dbReference>
<dbReference type="GO" id="GO:0005524">
    <property type="term" value="F:ATP binding"/>
    <property type="evidence" value="ECO:0007669"/>
    <property type="project" value="UniProtKB-KW"/>
</dbReference>
<dbReference type="GO" id="GO:0050567">
    <property type="term" value="F:glutaminyl-tRNA synthase (glutamine-hydrolyzing) activity"/>
    <property type="evidence" value="ECO:0007669"/>
    <property type="project" value="UniProtKB-UniRule"/>
</dbReference>
<dbReference type="GO" id="GO:0070681">
    <property type="term" value="P:glutaminyl-tRNAGln biosynthesis via transamidation"/>
    <property type="evidence" value="ECO:0007669"/>
    <property type="project" value="TreeGrafter"/>
</dbReference>
<dbReference type="GO" id="GO:0006450">
    <property type="term" value="P:regulation of translational fidelity"/>
    <property type="evidence" value="ECO:0007669"/>
    <property type="project" value="InterPro"/>
</dbReference>
<dbReference type="GO" id="GO:0006412">
    <property type="term" value="P:translation"/>
    <property type="evidence" value="ECO:0007669"/>
    <property type="project" value="UniProtKB-UniRule"/>
</dbReference>
<dbReference type="Gene3D" id="1.10.20.60">
    <property type="entry name" value="Glu-tRNAGln amidotransferase C subunit, N-terminal domain"/>
    <property type="match status" value="1"/>
</dbReference>
<dbReference type="HAMAP" id="MF_00122">
    <property type="entry name" value="GatC"/>
    <property type="match status" value="1"/>
</dbReference>
<dbReference type="InterPro" id="IPR036113">
    <property type="entry name" value="Asp/Glu-ADT_sf_sub_c"/>
</dbReference>
<dbReference type="InterPro" id="IPR003837">
    <property type="entry name" value="GatC"/>
</dbReference>
<dbReference type="NCBIfam" id="TIGR00135">
    <property type="entry name" value="gatC"/>
    <property type="match status" value="1"/>
</dbReference>
<dbReference type="PANTHER" id="PTHR15004">
    <property type="entry name" value="GLUTAMYL-TRNA(GLN) AMIDOTRANSFERASE SUBUNIT C, MITOCHONDRIAL"/>
    <property type="match status" value="1"/>
</dbReference>
<dbReference type="PANTHER" id="PTHR15004:SF0">
    <property type="entry name" value="GLUTAMYL-TRNA(GLN) AMIDOTRANSFERASE SUBUNIT C, MITOCHONDRIAL"/>
    <property type="match status" value="1"/>
</dbReference>
<dbReference type="Pfam" id="PF02686">
    <property type="entry name" value="GatC"/>
    <property type="match status" value="1"/>
</dbReference>
<dbReference type="SUPFAM" id="SSF141000">
    <property type="entry name" value="Glu-tRNAGln amidotransferase C subunit"/>
    <property type="match status" value="1"/>
</dbReference>
<keyword id="KW-0067">ATP-binding</keyword>
<keyword id="KW-0436">Ligase</keyword>
<keyword id="KW-0547">Nucleotide-binding</keyword>
<keyword id="KW-0648">Protein biosynthesis</keyword>
<name>GATC_NAUPA</name>
<protein>
    <recommendedName>
        <fullName evidence="1">Aspartyl/glutamyl-tRNA(Asn/Gln) amidotransferase subunit C</fullName>
        <shortName evidence="1">Asp/Glu-ADT subunit C</shortName>
        <ecNumber evidence="1">6.3.5.-</ecNumber>
    </recommendedName>
</protein>